<proteinExistence type="inferred from homology"/>
<evidence type="ECO:0000255" key="1">
    <source>
        <dbReference type="HAMAP-Rule" id="MF_00685"/>
    </source>
</evidence>
<keyword id="KW-0119">Carbohydrate metabolism</keyword>
<keyword id="KW-0320">Glycogen biosynthesis</keyword>
<keyword id="KW-0321">Glycogen metabolism</keyword>
<keyword id="KW-0328">Glycosyltransferase</keyword>
<keyword id="KW-0808">Transferase</keyword>
<feature type="chain" id="PRO_1000044969" description="1,4-alpha-glucan branching enzyme GlgB">
    <location>
        <begin position="1"/>
        <end position="736"/>
    </location>
</feature>
<feature type="active site" description="Nucleophile" evidence="1">
    <location>
        <position position="415"/>
    </location>
</feature>
<feature type="active site" description="Proton donor" evidence="1">
    <location>
        <position position="470"/>
    </location>
</feature>
<sequence>MTDTLFDRADIDALLAGRHPDPFACLGPHRHDDQIVVRALLPGAERVRALSPDGAELGTLACVDRAGCFAGTIAHDGGAPHYLLSIDWPDAHQVTDDAYAFGTLLDEAALARFSAGDPEAVLDCLGATPVRIDDTDGVRFAVWAPSAQRVSVVGDFNAWDGRRHPMRLRRPSGVWELFVPGIGAGERYKYELCAADGRVLPHKADPCARATEAPPRTASVVADVAALHAFAWHDDGWMHARPRHDDRYRVPWSIYEVHPESWQRIPEQMDRSATWDELAERLIPYVKGMGFTHVEFMPIAEYPFGGSWGYQPLAQFAPSARFGPVEGFARFVDRAHAAGIGVLVDWVPAHFPNDAHGLAQFDGSALYEHADPREGMHPDWNTCVFNVGRTEVSAFLVASALAWARRYHVDGIRVDAVASMLYRDYSRKEGEWVPNVYGGRENLESVAFLRRLNDTLHGDAAPAGVVTVAEESTAWPGVTAPTADGGLGFDFKWNMGWMHDTLAYLHEDPIHRRYHHDRMTFGLVYAFSERFVLPLSHDEVVHGKGSLVAKMPGDAWQRLATLRAYFGFMWAHPGKKLLFMGSEFAQWSEFAHDATPHWDLLDAPAHRGVQRLVRDLNRAYAAEPALHALDCHAAGFAWLIGDDRDNSVFAFARRDDTGRLVVAVCNFTPVPRAGYRLGLPAPGHWRELMNTDAASYGGTNAGNDGAVWAEAVPAHGEAWSASLRLPPLATLWLTPA</sequence>
<reference key="1">
    <citation type="submission" date="2006-08" db="EMBL/GenBank/DDBJ databases">
        <title>Complete sequence of chromosome 3 of Burkholderia cenocepacia HI2424.</title>
        <authorList>
            <person name="Copeland A."/>
            <person name="Lucas S."/>
            <person name="Lapidus A."/>
            <person name="Barry K."/>
            <person name="Detter J.C."/>
            <person name="Glavina del Rio T."/>
            <person name="Hammon N."/>
            <person name="Israni S."/>
            <person name="Pitluck S."/>
            <person name="Chain P."/>
            <person name="Malfatti S."/>
            <person name="Shin M."/>
            <person name="Vergez L."/>
            <person name="Schmutz J."/>
            <person name="Larimer F."/>
            <person name="Land M."/>
            <person name="Hauser L."/>
            <person name="Kyrpides N."/>
            <person name="Kim E."/>
            <person name="LiPuma J.J."/>
            <person name="Gonzalez C.F."/>
            <person name="Konstantinidis K."/>
            <person name="Tiedje J.M."/>
            <person name="Richardson P."/>
        </authorList>
    </citation>
    <scope>NUCLEOTIDE SEQUENCE [LARGE SCALE GENOMIC DNA]</scope>
    <source>
        <strain>HI2424</strain>
    </source>
</reference>
<gene>
    <name evidence="1" type="primary">glgB</name>
    <name type="ordered locus">Bcen2424_6497</name>
</gene>
<organism>
    <name type="scientific">Burkholderia cenocepacia (strain HI2424)</name>
    <dbReference type="NCBI Taxonomy" id="331272"/>
    <lineage>
        <taxon>Bacteria</taxon>
        <taxon>Pseudomonadati</taxon>
        <taxon>Pseudomonadota</taxon>
        <taxon>Betaproteobacteria</taxon>
        <taxon>Burkholderiales</taxon>
        <taxon>Burkholderiaceae</taxon>
        <taxon>Burkholderia</taxon>
        <taxon>Burkholderia cepacia complex</taxon>
    </lineage>
</organism>
<name>GLGB_BURCH</name>
<protein>
    <recommendedName>
        <fullName evidence="1">1,4-alpha-glucan branching enzyme GlgB</fullName>
        <ecNumber evidence="1">2.4.1.18</ecNumber>
    </recommendedName>
    <alternativeName>
        <fullName evidence="1">1,4-alpha-D-glucan:1,4-alpha-D-glucan 6-glucosyl-transferase</fullName>
    </alternativeName>
    <alternativeName>
        <fullName evidence="1">Alpha-(1-&gt;4)-glucan branching enzyme</fullName>
    </alternativeName>
    <alternativeName>
        <fullName evidence="1">Glycogen branching enzyme</fullName>
        <shortName evidence="1">BE</shortName>
    </alternativeName>
</protein>
<dbReference type="EC" id="2.4.1.18" evidence="1"/>
<dbReference type="EMBL" id="CP000460">
    <property type="protein sequence ID" value="ABK13227.1"/>
    <property type="molecule type" value="Genomic_DNA"/>
</dbReference>
<dbReference type="RefSeq" id="WP_011695010.1">
    <property type="nucleotide sequence ID" value="NC_008544.1"/>
</dbReference>
<dbReference type="SMR" id="A0KDG4"/>
<dbReference type="CAZy" id="CBM48">
    <property type="family name" value="Carbohydrate-Binding Module Family 48"/>
</dbReference>
<dbReference type="CAZy" id="GH13">
    <property type="family name" value="Glycoside Hydrolase Family 13"/>
</dbReference>
<dbReference type="KEGG" id="bch:Bcen2424_6497"/>
<dbReference type="HOGENOM" id="CLU_004245_3_2_4"/>
<dbReference type="UniPathway" id="UPA00164"/>
<dbReference type="GO" id="GO:0005829">
    <property type="term" value="C:cytosol"/>
    <property type="evidence" value="ECO:0007669"/>
    <property type="project" value="TreeGrafter"/>
</dbReference>
<dbReference type="GO" id="GO:0003844">
    <property type="term" value="F:1,4-alpha-glucan branching enzyme activity"/>
    <property type="evidence" value="ECO:0007669"/>
    <property type="project" value="UniProtKB-UniRule"/>
</dbReference>
<dbReference type="GO" id="GO:0043169">
    <property type="term" value="F:cation binding"/>
    <property type="evidence" value="ECO:0007669"/>
    <property type="project" value="InterPro"/>
</dbReference>
<dbReference type="GO" id="GO:0004553">
    <property type="term" value="F:hydrolase activity, hydrolyzing O-glycosyl compounds"/>
    <property type="evidence" value="ECO:0007669"/>
    <property type="project" value="InterPro"/>
</dbReference>
<dbReference type="GO" id="GO:0005978">
    <property type="term" value="P:glycogen biosynthetic process"/>
    <property type="evidence" value="ECO:0007669"/>
    <property type="project" value="UniProtKB-UniRule"/>
</dbReference>
<dbReference type="CDD" id="cd11322">
    <property type="entry name" value="AmyAc_Glg_BE"/>
    <property type="match status" value="1"/>
</dbReference>
<dbReference type="CDD" id="cd02855">
    <property type="entry name" value="E_set_GBE_prok_N"/>
    <property type="match status" value="1"/>
</dbReference>
<dbReference type="FunFam" id="2.60.40.10:FF:000169">
    <property type="entry name" value="1,4-alpha-glucan branching enzyme GlgB"/>
    <property type="match status" value="1"/>
</dbReference>
<dbReference type="FunFam" id="2.60.40.1180:FF:000002">
    <property type="entry name" value="1,4-alpha-glucan branching enzyme GlgB"/>
    <property type="match status" value="1"/>
</dbReference>
<dbReference type="FunFam" id="3.20.20.80:FF:000003">
    <property type="entry name" value="1,4-alpha-glucan branching enzyme GlgB"/>
    <property type="match status" value="1"/>
</dbReference>
<dbReference type="Gene3D" id="3.20.20.80">
    <property type="entry name" value="Glycosidases"/>
    <property type="match status" value="1"/>
</dbReference>
<dbReference type="Gene3D" id="2.60.40.1180">
    <property type="entry name" value="Golgi alpha-mannosidase II"/>
    <property type="match status" value="1"/>
</dbReference>
<dbReference type="Gene3D" id="2.60.40.10">
    <property type="entry name" value="Immunoglobulins"/>
    <property type="match status" value="1"/>
</dbReference>
<dbReference type="HAMAP" id="MF_00685">
    <property type="entry name" value="GlgB"/>
    <property type="match status" value="1"/>
</dbReference>
<dbReference type="InterPro" id="IPR006048">
    <property type="entry name" value="A-amylase/branching_C"/>
</dbReference>
<dbReference type="InterPro" id="IPR037439">
    <property type="entry name" value="Branching_enzy"/>
</dbReference>
<dbReference type="InterPro" id="IPR006407">
    <property type="entry name" value="GlgB"/>
</dbReference>
<dbReference type="InterPro" id="IPR054169">
    <property type="entry name" value="GlgB_N"/>
</dbReference>
<dbReference type="InterPro" id="IPR044143">
    <property type="entry name" value="GlgB_N_E_set_prok"/>
</dbReference>
<dbReference type="InterPro" id="IPR006047">
    <property type="entry name" value="Glyco_hydro_13_cat_dom"/>
</dbReference>
<dbReference type="InterPro" id="IPR004193">
    <property type="entry name" value="Glyco_hydro_13_N"/>
</dbReference>
<dbReference type="InterPro" id="IPR013780">
    <property type="entry name" value="Glyco_hydro_b"/>
</dbReference>
<dbReference type="InterPro" id="IPR017853">
    <property type="entry name" value="Glycoside_hydrolase_SF"/>
</dbReference>
<dbReference type="InterPro" id="IPR013783">
    <property type="entry name" value="Ig-like_fold"/>
</dbReference>
<dbReference type="InterPro" id="IPR014756">
    <property type="entry name" value="Ig_E-set"/>
</dbReference>
<dbReference type="NCBIfam" id="TIGR01515">
    <property type="entry name" value="branching_enzym"/>
    <property type="match status" value="1"/>
</dbReference>
<dbReference type="NCBIfam" id="NF003811">
    <property type="entry name" value="PRK05402.1"/>
    <property type="match status" value="1"/>
</dbReference>
<dbReference type="NCBIfam" id="NF008967">
    <property type="entry name" value="PRK12313.1"/>
    <property type="match status" value="1"/>
</dbReference>
<dbReference type="PANTHER" id="PTHR43651">
    <property type="entry name" value="1,4-ALPHA-GLUCAN-BRANCHING ENZYME"/>
    <property type="match status" value="1"/>
</dbReference>
<dbReference type="PANTHER" id="PTHR43651:SF3">
    <property type="entry name" value="1,4-ALPHA-GLUCAN-BRANCHING ENZYME"/>
    <property type="match status" value="1"/>
</dbReference>
<dbReference type="Pfam" id="PF02806">
    <property type="entry name" value="Alpha-amylase_C"/>
    <property type="match status" value="1"/>
</dbReference>
<dbReference type="Pfam" id="PF02922">
    <property type="entry name" value="CBM_48"/>
    <property type="match status" value="1"/>
</dbReference>
<dbReference type="Pfam" id="PF22019">
    <property type="entry name" value="GlgB_N"/>
    <property type="match status" value="1"/>
</dbReference>
<dbReference type="PIRSF" id="PIRSF000463">
    <property type="entry name" value="GlgB"/>
    <property type="match status" value="1"/>
</dbReference>
<dbReference type="SMART" id="SM00642">
    <property type="entry name" value="Aamy"/>
    <property type="match status" value="1"/>
</dbReference>
<dbReference type="SUPFAM" id="SSF51445">
    <property type="entry name" value="(Trans)glycosidases"/>
    <property type="match status" value="1"/>
</dbReference>
<dbReference type="SUPFAM" id="SSF81296">
    <property type="entry name" value="E set domains"/>
    <property type="match status" value="1"/>
</dbReference>
<dbReference type="SUPFAM" id="SSF51011">
    <property type="entry name" value="Glycosyl hydrolase domain"/>
    <property type="match status" value="1"/>
</dbReference>
<accession>A0KDG4</accession>
<comment type="function">
    <text evidence="1">Catalyzes the formation of the alpha-1,6-glucosidic linkages in glycogen by scission of a 1,4-alpha-linked oligosaccharide from growing alpha-1,4-glucan chains and the subsequent attachment of the oligosaccharide to the alpha-1,6 position.</text>
</comment>
<comment type="catalytic activity">
    <reaction evidence="1">
        <text>Transfers a segment of a (1-&gt;4)-alpha-D-glucan chain to a primary hydroxy group in a similar glucan chain.</text>
        <dbReference type="EC" id="2.4.1.18"/>
    </reaction>
</comment>
<comment type="pathway">
    <text evidence="1">Glycan biosynthesis; glycogen biosynthesis.</text>
</comment>
<comment type="subunit">
    <text evidence="1">Monomer.</text>
</comment>
<comment type="similarity">
    <text evidence="1">Belongs to the glycosyl hydrolase 13 family. GlgB subfamily.</text>
</comment>